<keyword id="KW-0143">Chaperone</keyword>
<keyword id="KW-0963">Cytoplasm</keyword>
<accession>B0JUI1</accession>
<sequence length="103" mass="10729">MAAVSINVTTVKPLGDRVFVKVSPSEEKTAGGIFLPDAAKEKPQIGEVVAVGPGKRNDDGSRTPVEVGVGDKVLYSKYAGTDIKLGGEEFVLLSEKDILAAVS</sequence>
<protein>
    <recommendedName>
        <fullName evidence="1">Co-chaperonin GroES</fullName>
    </recommendedName>
    <alternativeName>
        <fullName evidence="1">10 kDa chaperonin</fullName>
    </alternativeName>
    <alternativeName>
        <fullName evidence="1">Chaperonin-10</fullName>
        <shortName evidence="1">Cpn10</shortName>
    </alternativeName>
</protein>
<gene>
    <name evidence="1" type="primary">groES</name>
    <name evidence="1" type="synonym">groS</name>
    <name type="ordered locus">MAE_46070</name>
</gene>
<reference key="1">
    <citation type="journal article" date="2007" name="DNA Res.">
        <title>Complete genomic structure of the bloom-forming toxic cyanobacterium Microcystis aeruginosa NIES-843.</title>
        <authorList>
            <person name="Kaneko T."/>
            <person name="Nakajima N."/>
            <person name="Okamoto S."/>
            <person name="Suzuki I."/>
            <person name="Tanabe Y."/>
            <person name="Tamaoki M."/>
            <person name="Nakamura Y."/>
            <person name="Kasai F."/>
            <person name="Watanabe A."/>
            <person name="Kawashima K."/>
            <person name="Kishida Y."/>
            <person name="Ono A."/>
            <person name="Shimizu Y."/>
            <person name="Takahashi C."/>
            <person name="Minami C."/>
            <person name="Fujishiro T."/>
            <person name="Kohara M."/>
            <person name="Katoh M."/>
            <person name="Nakazaki N."/>
            <person name="Nakayama S."/>
            <person name="Yamada M."/>
            <person name="Tabata S."/>
            <person name="Watanabe M.M."/>
        </authorList>
    </citation>
    <scope>NUCLEOTIDE SEQUENCE [LARGE SCALE GENOMIC DNA]</scope>
    <source>
        <strain>NIES-843 / IAM M-247</strain>
    </source>
</reference>
<evidence type="ECO:0000255" key="1">
    <source>
        <dbReference type="HAMAP-Rule" id="MF_00580"/>
    </source>
</evidence>
<comment type="function">
    <text evidence="1">Together with the chaperonin GroEL, plays an essential role in assisting protein folding. The GroEL-GroES system forms a nano-cage that allows encapsulation of the non-native substrate proteins and provides a physical environment optimized to promote and accelerate protein folding. GroES binds to the apical surface of the GroEL ring, thereby capping the opening of the GroEL channel.</text>
</comment>
<comment type="subunit">
    <text evidence="1">Heptamer of 7 subunits arranged in a ring. Interacts with the chaperonin GroEL.</text>
</comment>
<comment type="subcellular location">
    <subcellularLocation>
        <location evidence="1">Cytoplasm</location>
    </subcellularLocation>
</comment>
<comment type="similarity">
    <text evidence="1">Belongs to the GroES chaperonin family.</text>
</comment>
<proteinExistence type="inferred from homology"/>
<feature type="chain" id="PRO_1000082381" description="Co-chaperonin GroES">
    <location>
        <begin position="1"/>
        <end position="103"/>
    </location>
</feature>
<dbReference type="EMBL" id="AP009552">
    <property type="protein sequence ID" value="BAG04429.1"/>
    <property type="molecule type" value="Genomic_DNA"/>
</dbReference>
<dbReference type="RefSeq" id="WP_002737272.1">
    <property type="nucleotide sequence ID" value="NC_010296.1"/>
</dbReference>
<dbReference type="SMR" id="B0JUI1"/>
<dbReference type="STRING" id="449447.MAE_46070"/>
<dbReference type="PaxDb" id="449447-MAE_46070"/>
<dbReference type="EnsemblBacteria" id="BAG04429">
    <property type="protein sequence ID" value="BAG04429"/>
    <property type="gene ID" value="MAE_46070"/>
</dbReference>
<dbReference type="GeneID" id="66705616"/>
<dbReference type="KEGG" id="mar:MAE_46070"/>
<dbReference type="eggNOG" id="COG0234">
    <property type="taxonomic scope" value="Bacteria"/>
</dbReference>
<dbReference type="HOGENOM" id="CLU_132825_2_1_3"/>
<dbReference type="BioCyc" id="MAER449447:MAE_RS19985-MONOMER"/>
<dbReference type="Proteomes" id="UP000001510">
    <property type="component" value="Chromosome"/>
</dbReference>
<dbReference type="GO" id="GO:0005737">
    <property type="term" value="C:cytoplasm"/>
    <property type="evidence" value="ECO:0007669"/>
    <property type="project" value="UniProtKB-SubCell"/>
</dbReference>
<dbReference type="GO" id="GO:0005524">
    <property type="term" value="F:ATP binding"/>
    <property type="evidence" value="ECO:0007669"/>
    <property type="project" value="InterPro"/>
</dbReference>
<dbReference type="GO" id="GO:0046872">
    <property type="term" value="F:metal ion binding"/>
    <property type="evidence" value="ECO:0007669"/>
    <property type="project" value="TreeGrafter"/>
</dbReference>
<dbReference type="GO" id="GO:0044183">
    <property type="term" value="F:protein folding chaperone"/>
    <property type="evidence" value="ECO:0007669"/>
    <property type="project" value="InterPro"/>
</dbReference>
<dbReference type="GO" id="GO:0051087">
    <property type="term" value="F:protein-folding chaperone binding"/>
    <property type="evidence" value="ECO:0007669"/>
    <property type="project" value="TreeGrafter"/>
</dbReference>
<dbReference type="GO" id="GO:0051082">
    <property type="term" value="F:unfolded protein binding"/>
    <property type="evidence" value="ECO:0007669"/>
    <property type="project" value="TreeGrafter"/>
</dbReference>
<dbReference type="GO" id="GO:0051085">
    <property type="term" value="P:chaperone cofactor-dependent protein refolding"/>
    <property type="evidence" value="ECO:0007669"/>
    <property type="project" value="TreeGrafter"/>
</dbReference>
<dbReference type="CDD" id="cd00320">
    <property type="entry name" value="cpn10"/>
    <property type="match status" value="1"/>
</dbReference>
<dbReference type="FunFam" id="2.30.33.40:FF:000001">
    <property type="entry name" value="10 kDa chaperonin"/>
    <property type="match status" value="1"/>
</dbReference>
<dbReference type="Gene3D" id="2.30.33.40">
    <property type="entry name" value="GroES chaperonin"/>
    <property type="match status" value="1"/>
</dbReference>
<dbReference type="HAMAP" id="MF_00580">
    <property type="entry name" value="CH10"/>
    <property type="match status" value="1"/>
</dbReference>
<dbReference type="InterPro" id="IPR020818">
    <property type="entry name" value="Chaperonin_GroES"/>
</dbReference>
<dbReference type="InterPro" id="IPR037124">
    <property type="entry name" value="Chaperonin_GroES_sf"/>
</dbReference>
<dbReference type="InterPro" id="IPR018369">
    <property type="entry name" value="Chaprnonin_Cpn10_CS"/>
</dbReference>
<dbReference type="InterPro" id="IPR011032">
    <property type="entry name" value="GroES-like_sf"/>
</dbReference>
<dbReference type="NCBIfam" id="NF001530">
    <property type="entry name" value="PRK00364.1-6"/>
    <property type="match status" value="1"/>
</dbReference>
<dbReference type="NCBIfam" id="NF001531">
    <property type="entry name" value="PRK00364.2-2"/>
    <property type="match status" value="1"/>
</dbReference>
<dbReference type="NCBIfam" id="NF001533">
    <property type="entry name" value="PRK00364.2-4"/>
    <property type="match status" value="1"/>
</dbReference>
<dbReference type="NCBIfam" id="NF001534">
    <property type="entry name" value="PRK00364.2-5"/>
    <property type="match status" value="1"/>
</dbReference>
<dbReference type="PANTHER" id="PTHR10772">
    <property type="entry name" value="10 KDA HEAT SHOCK PROTEIN"/>
    <property type="match status" value="1"/>
</dbReference>
<dbReference type="PANTHER" id="PTHR10772:SF58">
    <property type="entry name" value="CO-CHAPERONIN GROES"/>
    <property type="match status" value="1"/>
</dbReference>
<dbReference type="Pfam" id="PF00166">
    <property type="entry name" value="Cpn10"/>
    <property type="match status" value="1"/>
</dbReference>
<dbReference type="PRINTS" id="PR00297">
    <property type="entry name" value="CHAPERONIN10"/>
</dbReference>
<dbReference type="SMART" id="SM00883">
    <property type="entry name" value="Cpn10"/>
    <property type="match status" value="1"/>
</dbReference>
<dbReference type="SUPFAM" id="SSF50129">
    <property type="entry name" value="GroES-like"/>
    <property type="match status" value="1"/>
</dbReference>
<dbReference type="PROSITE" id="PS00681">
    <property type="entry name" value="CHAPERONINS_CPN10"/>
    <property type="match status" value="1"/>
</dbReference>
<name>CH10_MICAN</name>
<organism>
    <name type="scientific">Microcystis aeruginosa (strain NIES-843 / IAM M-2473)</name>
    <dbReference type="NCBI Taxonomy" id="449447"/>
    <lineage>
        <taxon>Bacteria</taxon>
        <taxon>Bacillati</taxon>
        <taxon>Cyanobacteriota</taxon>
        <taxon>Cyanophyceae</taxon>
        <taxon>Oscillatoriophycideae</taxon>
        <taxon>Chroococcales</taxon>
        <taxon>Microcystaceae</taxon>
        <taxon>Microcystis</taxon>
    </lineage>
</organism>